<sequence>MILISDATLRDGNHAIRHQLSAAQIHAYARAADEAGIDVVEVGHGNGLGGSSCLLGQTPIGDRLMLETARAALRTSRLGVHFIPGLGKAADISLALEIGVDVVRVATHCTEANVSARFIEQTRTAGRTAFGVLMMSHMAPPDTLLAQAKLMERYGAQAVVLMDSAGYSTPSLVRAKVERLVDGLDIDVGFHAHNNLGLAVANSLVALEAGARIVDACVKGFGAGAGNTQLETLVAAMEREGHDTRTTFERVMTLARGTETFLNPKTPHIQPANIASGLYGLFSGYVPHIQKAAQEFGVNEFELYKRLAERKLVAGQEDIIIEEASRLARERDVQRATGGVRVRELSA</sequence>
<accession>A3P825</accession>
<organism>
    <name type="scientific">Burkholderia pseudomallei (strain 1106a)</name>
    <dbReference type="NCBI Taxonomy" id="357348"/>
    <lineage>
        <taxon>Bacteria</taxon>
        <taxon>Pseudomonadati</taxon>
        <taxon>Pseudomonadota</taxon>
        <taxon>Betaproteobacteria</taxon>
        <taxon>Burkholderiales</taxon>
        <taxon>Burkholderiaceae</taxon>
        <taxon>Burkholderia</taxon>
        <taxon>pseudomallei group</taxon>
    </lineage>
</organism>
<keyword id="KW-0058">Aromatic hydrocarbons catabolism</keyword>
<keyword id="KW-0456">Lyase</keyword>
<keyword id="KW-0464">Manganese</keyword>
<keyword id="KW-0479">Metal-binding</keyword>
<proteinExistence type="inferred from homology"/>
<gene>
    <name type="ordered locus">BURPS1106A_A2454</name>
</gene>
<protein>
    <recommendedName>
        <fullName evidence="1">4-hydroxy-2-oxovalerate aldolase</fullName>
        <shortName evidence="1">HOA</shortName>
        <ecNumber evidence="1">4.1.3.39</ecNumber>
    </recommendedName>
    <alternativeName>
        <fullName evidence="1">4-hydroxy-2-keto-pentanoic acid aldolase</fullName>
    </alternativeName>
    <alternativeName>
        <fullName evidence="1">4-hydroxy-2-oxopentanoate aldolase</fullName>
    </alternativeName>
</protein>
<comment type="catalytic activity">
    <reaction evidence="1">
        <text>(S)-4-hydroxy-2-oxopentanoate = acetaldehyde + pyruvate</text>
        <dbReference type="Rhea" id="RHEA:22624"/>
        <dbReference type="ChEBI" id="CHEBI:15343"/>
        <dbReference type="ChEBI" id="CHEBI:15361"/>
        <dbReference type="ChEBI" id="CHEBI:73143"/>
        <dbReference type="EC" id="4.1.3.39"/>
    </reaction>
</comment>
<comment type="similarity">
    <text evidence="1">Belongs to the 4-hydroxy-2-oxovalerate aldolase family.</text>
</comment>
<reference key="1">
    <citation type="journal article" date="2010" name="Genome Biol. Evol.">
        <title>Continuing evolution of Burkholderia mallei through genome reduction and large-scale rearrangements.</title>
        <authorList>
            <person name="Losada L."/>
            <person name="Ronning C.M."/>
            <person name="DeShazer D."/>
            <person name="Woods D."/>
            <person name="Fedorova N."/>
            <person name="Kim H.S."/>
            <person name="Shabalina S.A."/>
            <person name="Pearson T.R."/>
            <person name="Brinkac L."/>
            <person name="Tan P."/>
            <person name="Nandi T."/>
            <person name="Crabtree J."/>
            <person name="Badger J."/>
            <person name="Beckstrom-Sternberg S."/>
            <person name="Saqib M."/>
            <person name="Schutzer S.E."/>
            <person name="Keim P."/>
            <person name="Nierman W.C."/>
        </authorList>
    </citation>
    <scope>NUCLEOTIDE SEQUENCE [LARGE SCALE GENOMIC DNA]</scope>
    <source>
        <strain>1106a</strain>
    </source>
</reference>
<name>HOA_BURP0</name>
<dbReference type="EC" id="4.1.3.39" evidence="1"/>
<dbReference type="EMBL" id="CP000573">
    <property type="protein sequence ID" value="ABN94529.1"/>
    <property type="molecule type" value="Genomic_DNA"/>
</dbReference>
<dbReference type="SMR" id="A3P825"/>
<dbReference type="KEGG" id="bpl:BURPS1106A_A2454"/>
<dbReference type="HOGENOM" id="CLU_049173_0_0_4"/>
<dbReference type="Proteomes" id="UP000006738">
    <property type="component" value="Chromosome II"/>
</dbReference>
<dbReference type="GO" id="GO:0003852">
    <property type="term" value="F:2-isopropylmalate synthase activity"/>
    <property type="evidence" value="ECO:0007669"/>
    <property type="project" value="TreeGrafter"/>
</dbReference>
<dbReference type="GO" id="GO:0008701">
    <property type="term" value="F:4-hydroxy-2-oxovalerate aldolase activity"/>
    <property type="evidence" value="ECO:0007669"/>
    <property type="project" value="UniProtKB-UniRule"/>
</dbReference>
<dbReference type="GO" id="GO:0030145">
    <property type="term" value="F:manganese ion binding"/>
    <property type="evidence" value="ECO:0007669"/>
    <property type="project" value="UniProtKB-UniRule"/>
</dbReference>
<dbReference type="GO" id="GO:0009056">
    <property type="term" value="P:catabolic process"/>
    <property type="evidence" value="ECO:0007669"/>
    <property type="project" value="UniProtKB-KW"/>
</dbReference>
<dbReference type="GO" id="GO:0009098">
    <property type="term" value="P:L-leucine biosynthetic process"/>
    <property type="evidence" value="ECO:0007669"/>
    <property type="project" value="TreeGrafter"/>
</dbReference>
<dbReference type="CDD" id="cd07943">
    <property type="entry name" value="DRE_TIM_HOA"/>
    <property type="match status" value="1"/>
</dbReference>
<dbReference type="Gene3D" id="1.10.8.60">
    <property type="match status" value="1"/>
</dbReference>
<dbReference type="Gene3D" id="3.20.20.70">
    <property type="entry name" value="Aldolase class I"/>
    <property type="match status" value="1"/>
</dbReference>
<dbReference type="HAMAP" id="MF_01656">
    <property type="entry name" value="HOA"/>
    <property type="match status" value="1"/>
</dbReference>
<dbReference type="InterPro" id="IPR050073">
    <property type="entry name" value="2-IPM_HCS-like"/>
</dbReference>
<dbReference type="InterPro" id="IPR017629">
    <property type="entry name" value="4OH_2_O-val_aldolase"/>
</dbReference>
<dbReference type="InterPro" id="IPR013785">
    <property type="entry name" value="Aldolase_TIM"/>
</dbReference>
<dbReference type="InterPro" id="IPR012425">
    <property type="entry name" value="DmpG_comm"/>
</dbReference>
<dbReference type="InterPro" id="IPR035685">
    <property type="entry name" value="DRE_TIM_HOA"/>
</dbReference>
<dbReference type="InterPro" id="IPR000891">
    <property type="entry name" value="PYR_CT"/>
</dbReference>
<dbReference type="NCBIfam" id="TIGR03217">
    <property type="entry name" value="4OH_2_O_val_ald"/>
    <property type="match status" value="1"/>
</dbReference>
<dbReference type="NCBIfam" id="NF006049">
    <property type="entry name" value="PRK08195.1"/>
    <property type="match status" value="1"/>
</dbReference>
<dbReference type="PANTHER" id="PTHR10277:SF9">
    <property type="entry name" value="2-ISOPROPYLMALATE SYNTHASE 1, CHLOROPLASTIC-RELATED"/>
    <property type="match status" value="1"/>
</dbReference>
<dbReference type="PANTHER" id="PTHR10277">
    <property type="entry name" value="HOMOCITRATE SYNTHASE-RELATED"/>
    <property type="match status" value="1"/>
</dbReference>
<dbReference type="Pfam" id="PF07836">
    <property type="entry name" value="DmpG_comm"/>
    <property type="match status" value="1"/>
</dbReference>
<dbReference type="Pfam" id="PF00682">
    <property type="entry name" value="HMGL-like"/>
    <property type="match status" value="1"/>
</dbReference>
<dbReference type="SUPFAM" id="SSF51569">
    <property type="entry name" value="Aldolase"/>
    <property type="match status" value="1"/>
</dbReference>
<dbReference type="SUPFAM" id="SSF89000">
    <property type="entry name" value="post-HMGL domain-like"/>
    <property type="match status" value="1"/>
</dbReference>
<dbReference type="PROSITE" id="PS50991">
    <property type="entry name" value="PYR_CT"/>
    <property type="match status" value="1"/>
</dbReference>
<feature type="chain" id="PRO_0000387800" description="4-hydroxy-2-oxovalerate aldolase">
    <location>
        <begin position="1"/>
        <end position="347"/>
    </location>
</feature>
<feature type="domain" description="Pyruvate carboxyltransferase" evidence="1">
    <location>
        <begin position="2"/>
        <end position="252"/>
    </location>
</feature>
<feature type="active site" description="Proton acceptor" evidence="1">
    <location>
        <position position="14"/>
    </location>
</feature>
<feature type="binding site" evidence="1">
    <location>
        <begin position="10"/>
        <end position="11"/>
    </location>
    <ligand>
        <name>substrate</name>
    </ligand>
</feature>
<feature type="binding site" evidence="1">
    <location>
        <position position="11"/>
    </location>
    <ligand>
        <name>Mn(2+)</name>
        <dbReference type="ChEBI" id="CHEBI:29035"/>
    </ligand>
</feature>
<feature type="binding site" evidence="1">
    <location>
        <position position="164"/>
    </location>
    <ligand>
        <name>substrate</name>
    </ligand>
</feature>
<feature type="binding site" evidence="1">
    <location>
        <position position="191"/>
    </location>
    <ligand>
        <name>Mn(2+)</name>
        <dbReference type="ChEBI" id="CHEBI:29035"/>
    </ligand>
</feature>
<feature type="binding site" evidence="1">
    <location>
        <position position="191"/>
    </location>
    <ligand>
        <name>substrate</name>
    </ligand>
</feature>
<feature type="binding site" evidence="1">
    <location>
        <position position="193"/>
    </location>
    <ligand>
        <name>Mn(2+)</name>
        <dbReference type="ChEBI" id="CHEBI:29035"/>
    </ligand>
</feature>
<feature type="site" description="Transition state stabilizer" evidence="1">
    <location>
        <position position="10"/>
    </location>
</feature>
<evidence type="ECO:0000255" key="1">
    <source>
        <dbReference type="HAMAP-Rule" id="MF_01656"/>
    </source>
</evidence>